<protein>
    <recommendedName>
        <fullName>F-box protein At1g47056</fullName>
    </recommendedName>
</protein>
<dbReference type="EMBL" id="AC083835">
    <property type="protein sequence ID" value="AAG50633.1"/>
    <property type="molecule type" value="Genomic_DNA"/>
</dbReference>
<dbReference type="EMBL" id="CP002684">
    <property type="protein sequence ID" value="AEE32134.1"/>
    <property type="molecule type" value="Genomic_DNA"/>
</dbReference>
<dbReference type="PIR" id="D96512">
    <property type="entry name" value="D96512"/>
</dbReference>
<dbReference type="RefSeq" id="NP_175151.1">
    <property type="nucleotide sequence ID" value="NM_103611.2"/>
</dbReference>
<dbReference type="SMR" id="Q9C626"/>
<dbReference type="FunCoup" id="Q9C626">
    <property type="interactions" value="530"/>
</dbReference>
<dbReference type="STRING" id="3702.Q9C626"/>
<dbReference type="PaxDb" id="3702-AT1G47056.1"/>
<dbReference type="EnsemblPlants" id="AT1G47056.1">
    <property type="protein sequence ID" value="AT1G47056.1"/>
    <property type="gene ID" value="AT1G47056"/>
</dbReference>
<dbReference type="GeneID" id="841121"/>
<dbReference type="Gramene" id="AT1G47056.1">
    <property type="protein sequence ID" value="AT1G47056.1"/>
    <property type="gene ID" value="AT1G47056"/>
</dbReference>
<dbReference type="KEGG" id="ath:AT1G47056"/>
<dbReference type="Araport" id="AT1G47056"/>
<dbReference type="TAIR" id="AT1G47056">
    <property type="gene designation" value="VFB1"/>
</dbReference>
<dbReference type="eggNOG" id="KOG1947">
    <property type="taxonomic scope" value="Eukaryota"/>
</dbReference>
<dbReference type="HOGENOM" id="CLU_016072_4_0_1"/>
<dbReference type="InParanoid" id="Q9C626"/>
<dbReference type="OMA" id="ETVHVDR"/>
<dbReference type="PhylomeDB" id="Q9C626"/>
<dbReference type="PRO" id="PR:Q9C626"/>
<dbReference type="Proteomes" id="UP000006548">
    <property type="component" value="Chromosome 1"/>
</dbReference>
<dbReference type="ExpressionAtlas" id="Q9C626">
    <property type="expression patterns" value="baseline and differential"/>
</dbReference>
<dbReference type="GO" id="GO:0004842">
    <property type="term" value="F:ubiquitin-protein transferase activity"/>
    <property type="evidence" value="ECO:0000250"/>
    <property type="project" value="TAIR"/>
</dbReference>
<dbReference type="CDD" id="cd22159">
    <property type="entry name" value="F-box_AtTIR1-like"/>
    <property type="match status" value="1"/>
</dbReference>
<dbReference type="FunFam" id="3.80.10.10:FF:000449">
    <property type="entry name" value="F-box protein SKIP2"/>
    <property type="match status" value="1"/>
</dbReference>
<dbReference type="FunFam" id="1.20.1280.50:FF:000005">
    <property type="entry name" value="F-box/LRR-repeat protein 3 isoform X1"/>
    <property type="match status" value="1"/>
</dbReference>
<dbReference type="Gene3D" id="1.20.1280.50">
    <property type="match status" value="1"/>
</dbReference>
<dbReference type="Gene3D" id="3.80.10.10">
    <property type="entry name" value="Ribonuclease Inhibitor"/>
    <property type="match status" value="1"/>
</dbReference>
<dbReference type="InterPro" id="IPR001810">
    <property type="entry name" value="F-box_dom"/>
</dbReference>
<dbReference type="InterPro" id="IPR001611">
    <property type="entry name" value="Leu-rich_rpt"/>
</dbReference>
<dbReference type="InterPro" id="IPR006553">
    <property type="entry name" value="Leu-rich_rpt_Cys-con_subtyp"/>
</dbReference>
<dbReference type="InterPro" id="IPR032675">
    <property type="entry name" value="LRR_dom_sf"/>
</dbReference>
<dbReference type="PANTHER" id="PTHR13318:SF92">
    <property type="entry name" value="F-BOX_LRR-REPEAT PROTEIN 8-RELATED"/>
    <property type="match status" value="1"/>
</dbReference>
<dbReference type="PANTHER" id="PTHR13318">
    <property type="entry name" value="PARTNER OF PAIRED, ISOFORM B-RELATED"/>
    <property type="match status" value="1"/>
</dbReference>
<dbReference type="Pfam" id="PF12937">
    <property type="entry name" value="F-box-like"/>
    <property type="match status" value="1"/>
</dbReference>
<dbReference type="Pfam" id="PF13516">
    <property type="entry name" value="LRR_6"/>
    <property type="match status" value="1"/>
</dbReference>
<dbReference type="SMART" id="SM00367">
    <property type="entry name" value="LRR_CC"/>
    <property type="match status" value="6"/>
</dbReference>
<dbReference type="SUPFAM" id="SSF52047">
    <property type="entry name" value="RNI-like"/>
    <property type="match status" value="1"/>
</dbReference>
<dbReference type="PROSITE" id="PS50181">
    <property type="entry name" value="FBOX"/>
    <property type="match status" value="1"/>
</dbReference>
<name>FB37_ARATH</name>
<reference key="1">
    <citation type="journal article" date="2000" name="Nature">
        <title>Sequence and analysis of chromosome 1 of the plant Arabidopsis thaliana.</title>
        <authorList>
            <person name="Theologis A."/>
            <person name="Ecker J.R."/>
            <person name="Palm C.J."/>
            <person name="Federspiel N.A."/>
            <person name="Kaul S."/>
            <person name="White O."/>
            <person name="Alonso J."/>
            <person name="Altafi H."/>
            <person name="Araujo R."/>
            <person name="Bowman C.L."/>
            <person name="Brooks S.Y."/>
            <person name="Buehler E."/>
            <person name="Chan A."/>
            <person name="Chao Q."/>
            <person name="Chen H."/>
            <person name="Cheuk R.F."/>
            <person name="Chin C.W."/>
            <person name="Chung M.K."/>
            <person name="Conn L."/>
            <person name="Conway A.B."/>
            <person name="Conway A.R."/>
            <person name="Creasy T.H."/>
            <person name="Dewar K."/>
            <person name="Dunn P."/>
            <person name="Etgu P."/>
            <person name="Feldblyum T.V."/>
            <person name="Feng J.-D."/>
            <person name="Fong B."/>
            <person name="Fujii C.Y."/>
            <person name="Gill J.E."/>
            <person name="Goldsmith A.D."/>
            <person name="Haas B."/>
            <person name="Hansen N.F."/>
            <person name="Hughes B."/>
            <person name="Huizar L."/>
            <person name="Hunter J.L."/>
            <person name="Jenkins J."/>
            <person name="Johnson-Hopson C."/>
            <person name="Khan S."/>
            <person name="Khaykin E."/>
            <person name="Kim C.J."/>
            <person name="Koo H.L."/>
            <person name="Kremenetskaia I."/>
            <person name="Kurtz D.B."/>
            <person name="Kwan A."/>
            <person name="Lam B."/>
            <person name="Langin-Hooper S."/>
            <person name="Lee A."/>
            <person name="Lee J.M."/>
            <person name="Lenz C.A."/>
            <person name="Li J.H."/>
            <person name="Li Y.-P."/>
            <person name="Lin X."/>
            <person name="Liu S.X."/>
            <person name="Liu Z.A."/>
            <person name="Luros J.S."/>
            <person name="Maiti R."/>
            <person name="Marziali A."/>
            <person name="Militscher J."/>
            <person name="Miranda M."/>
            <person name="Nguyen M."/>
            <person name="Nierman W.C."/>
            <person name="Osborne B.I."/>
            <person name="Pai G."/>
            <person name="Peterson J."/>
            <person name="Pham P.K."/>
            <person name="Rizzo M."/>
            <person name="Rooney T."/>
            <person name="Rowley D."/>
            <person name="Sakano H."/>
            <person name="Salzberg S.L."/>
            <person name="Schwartz J.R."/>
            <person name="Shinn P."/>
            <person name="Southwick A.M."/>
            <person name="Sun H."/>
            <person name="Tallon L.J."/>
            <person name="Tambunga G."/>
            <person name="Toriumi M.J."/>
            <person name="Town C.D."/>
            <person name="Utterback T."/>
            <person name="Van Aken S."/>
            <person name="Vaysberg M."/>
            <person name="Vysotskaia V.S."/>
            <person name="Walker M."/>
            <person name="Wu D."/>
            <person name="Yu G."/>
            <person name="Fraser C.M."/>
            <person name="Venter J.C."/>
            <person name="Davis R.W."/>
        </authorList>
    </citation>
    <scope>NUCLEOTIDE SEQUENCE [LARGE SCALE GENOMIC DNA]</scope>
    <source>
        <strain>cv. Columbia</strain>
    </source>
</reference>
<reference key="2">
    <citation type="journal article" date="2017" name="Plant J.">
        <title>Araport11: a complete reannotation of the Arabidopsis thaliana reference genome.</title>
        <authorList>
            <person name="Cheng C.Y."/>
            <person name="Krishnakumar V."/>
            <person name="Chan A.P."/>
            <person name="Thibaud-Nissen F."/>
            <person name="Schobel S."/>
            <person name="Town C.D."/>
        </authorList>
    </citation>
    <scope>GENOME REANNOTATION</scope>
    <source>
        <strain>cv. Columbia</strain>
    </source>
</reference>
<proteinExistence type="evidence at transcript level"/>
<feature type="chain" id="PRO_0000283313" description="F-box protein At1g47056">
    <location>
        <begin position="1"/>
        <end position="518"/>
    </location>
</feature>
<feature type="domain" description="F-box" evidence="1">
    <location>
        <begin position="37"/>
        <end position="82"/>
    </location>
</feature>
<accession>Q9C626</accession>
<sequence length="518" mass="56497">MGQSTSAAGNSILNRRRSKSFTLKFPIESIESEISQPDYTSSLPDECLALVFQFLNSGNRKRCALVCRRWMIVEGQNRYRLSLHARSDLITSIPSLFSRFDSVTKLSLKCDRRSVSIGDEALVKISLRCRNLKRLKLRACRELTDVGMAAFAENCKDLKIFSCGSCDFGAKGVKAVLDHCSNLEELSIKRLRGFTDIAPEMIGPGVAASSLKSICLKELYNGQCFGPVIVGAKNLKSLKLFRCSGDWDLLLQEMSGKDHGVVEIHLERMQVSDVALSAISYCSSLESLHLVKTPECTNFGLAAIAEKCKRLRKLHIDGWKANLIGDEGLVAVAKFCSQLQELVLIGVNPTTLSLGMLAAKCLNLERLALCGCDTFGDPELSCIAAKCPALRKLCIKNCPISDVGIENLANGCPGLTKVKIKKCKGVLGGCADWLRTVRPMLSVNADTMEQEHEEAASNDVVGGSQENGIEFPQLNSQIMASSIASSSRNRSGYFKSGIGLFSGMSLVPCTSRQRRASR</sequence>
<evidence type="ECO:0000255" key="1">
    <source>
        <dbReference type="PROSITE-ProRule" id="PRU00080"/>
    </source>
</evidence>
<gene>
    <name type="ordered locus">At1g47056</name>
    <name type="ORF">F2G19.16</name>
</gene>
<organism>
    <name type="scientific">Arabidopsis thaliana</name>
    <name type="common">Mouse-ear cress</name>
    <dbReference type="NCBI Taxonomy" id="3702"/>
    <lineage>
        <taxon>Eukaryota</taxon>
        <taxon>Viridiplantae</taxon>
        <taxon>Streptophyta</taxon>
        <taxon>Embryophyta</taxon>
        <taxon>Tracheophyta</taxon>
        <taxon>Spermatophyta</taxon>
        <taxon>Magnoliopsida</taxon>
        <taxon>eudicotyledons</taxon>
        <taxon>Gunneridae</taxon>
        <taxon>Pentapetalae</taxon>
        <taxon>rosids</taxon>
        <taxon>malvids</taxon>
        <taxon>Brassicales</taxon>
        <taxon>Brassicaceae</taxon>
        <taxon>Camelineae</taxon>
        <taxon>Arabidopsis</taxon>
    </lineage>
</organism>
<keyword id="KW-1185">Reference proteome</keyword>